<accession>A0LY87</accession>
<evidence type="ECO:0000255" key="1">
    <source>
        <dbReference type="HAMAP-Rule" id="MF_00518"/>
    </source>
</evidence>
<reference key="1">
    <citation type="journal article" date="2006" name="Environ. Microbiol.">
        <title>Whole genome analysis of the marine Bacteroidetes'Gramella forsetii' reveals adaptations to degradation of polymeric organic matter.</title>
        <authorList>
            <person name="Bauer M."/>
            <person name="Kube M."/>
            <person name="Teeling H."/>
            <person name="Richter M."/>
            <person name="Lombardot T."/>
            <person name="Allers E."/>
            <person name="Wuerdemann C.A."/>
            <person name="Quast C."/>
            <person name="Kuhl H."/>
            <person name="Knaust F."/>
            <person name="Woebken D."/>
            <person name="Bischof K."/>
            <person name="Mussmann M."/>
            <person name="Choudhuri J.V."/>
            <person name="Meyer F."/>
            <person name="Reinhardt R."/>
            <person name="Amann R.I."/>
            <person name="Gloeckner F.O."/>
        </authorList>
    </citation>
    <scope>NUCLEOTIDE SEQUENCE [LARGE SCALE GENOMIC DNA]</scope>
    <source>
        <strain>DSM 17595 / CGMCC 1.15422 / KT0803</strain>
    </source>
</reference>
<gene>
    <name evidence="1" type="primary">dtd</name>
    <name type="ordered locus">GFO_0346</name>
</gene>
<organism>
    <name type="scientific">Christiangramia forsetii (strain DSM 17595 / CGMCC 1.15422 / KT0803)</name>
    <name type="common">Gramella forsetii</name>
    <dbReference type="NCBI Taxonomy" id="411154"/>
    <lineage>
        <taxon>Bacteria</taxon>
        <taxon>Pseudomonadati</taxon>
        <taxon>Bacteroidota</taxon>
        <taxon>Flavobacteriia</taxon>
        <taxon>Flavobacteriales</taxon>
        <taxon>Flavobacteriaceae</taxon>
        <taxon>Christiangramia</taxon>
    </lineage>
</organism>
<proteinExistence type="inferred from homology"/>
<dbReference type="EC" id="3.1.1.96" evidence="1"/>
<dbReference type="EMBL" id="CU207366">
    <property type="protein sequence ID" value="CAL65332.1"/>
    <property type="molecule type" value="Genomic_DNA"/>
</dbReference>
<dbReference type="RefSeq" id="WP_011708270.1">
    <property type="nucleotide sequence ID" value="NC_008571.1"/>
</dbReference>
<dbReference type="SMR" id="A0LY87"/>
<dbReference type="STRING" id="411154.GFO_0346"/>
<dbReference type="KEGG" id="gfo:GFO_0346"/>
<dbReference type="eggNOG" id="COG1490">
    <property type="taxonomic scope" value="Bacteria"/>
</dbReference>
<dbReference type="HOGENOM" id="CLU_076901_1_0_10"/>
<dbReference type="OrthoDB" id="9801395at2"/>
<dbReference type="Proteomes" id="UP000000755">
    <property type="component" value="Chromosome"/>
</dbReference>
<dbReference type="GO" id="GO:0005737">
    <property type="term" value="C:cytoplasm"/>
    <property type="evidence" value="ECO:0007669"/>
    <property type="project" value="UniProtKB-SubCell"/>
</dbReference>
<dbReference type="GO" id="GO:0051500">
    <property type="term" value="F:D-tyrosyl-tRNA(Tyr) deacylase activity"/>
    <property type="evidence" value="ECO:0007669"/>
    <property type="project" value="TreeGrafter"/>
</dbReference>
<dbReference type="GO" id="GO:0106026">
    <property type="term" value="F:Gly-tRNA(Ala) deacylase activity"/>
    <property type="evidence" value="ECO:0007669"/>
    <property type="project" value="UniProtKB-UniRule"/>
</dbReference>
<dbReference type="GO" id="GO:0043908">
    <property type="term" value="F:Ser(Gly)-tRNA(Ala) hydrolase activity"/>
    <property type="evidence" value="ECO:0007669"/>
    <property type="project" value="UniProtKB-UniRule"/>
</dbReference>
<dbReference type="GO" id="GO:0000049">
    <property type="term" value="F:tRNA binding"/>
    <property type="evidence" value="ECO:0007669"/>
    <property type="project" value="UniProtKB-UniRule"/>
</dbReference>
<dbReference type="GO" id="GO:0019478">
    <property type="term" value="P:D-amino acid catabolic process"/>
    <property type="evidence" value="ECO:0007669"/>
    <property type="project" value="UniProtKB-UniRule"/>
</dbReference>
<dbReference type="FunFam" id="3.50.80.10:FF:000001">
    <property type="entry name" value="D-aminoacyl-tRNA deacylase"/>
    <property type="match status" value="1"/>
</dbReference>
<dbReference type="Gene3D" id="3.50.80.10">
    <property type="entry name" value="D-tyrosyl-tRNA(Tyr) deacylase"/>
    <property type="match status" value="1"/>
</dbReference>
<dbReference type="HAMAP" id="MF_00518">
    <property type="entry name" value="Deacylase_Dtd"/>
    <property type="match status" value="1"/>
</dbReference>
<dbReference type="InterPro" id="IPR003732">
    <property type="entry name" value="Daa-tRNA_deacyls_DTD"/>
</dbReference>
<dbReference type="InterPro" id="IPR023509">
    <property type="entry name" value="DTD-like_sf"/>
</dbReference>
<dbReference type="NCBIfam" id="TIGR00256">
    <property type="entry name" value="D-aminoacyl-tRNA deacylase"/>
    <property type="match status" value="1"/>
</dbReference>
<dbReference type="PANTHER" id="PTHR10472:SF5">
    <property type="entry name" value="D-AMINOACYL-TRNA DEACYLASE 1"/>
    <property type="match status" value="1"/>
</dbReference>
<dbReference type="PANTHER" id="PTHR10472">
    <property type="entry name" value="D-TYROSYL-TRNA TYR DEACYLASE"/>
    <property type="match status" value="1"/>
</dbReference>
<dbReference type="Pfam" id="PF02580">
    <property type="entry name" value="Tyr_Deacylase"/>
    <property type="match status" value="1"/>
</dbReference>
<dbReference type="SUPFAM" id="SSF69500">
    <property type="entry name" value="DTD-like"/>
    <property type="match status" value="1"/>
</dbReference>
<feature type="chain" id="PRO_1000050835" description="D-aminoacyl-tRNA deacylase">
    <location>
        <begin position="1"/>
        <end position="150"/>
    </location>
</feature>
<feature type="short sequence motif" description="Gly-cisPro motif, important for rejection of L-amino acids" evidence="1">
    <location>
        <begin position="138"/>
        <end position="139"/>
    </location>
</feature>
<comment type="function">
    <text evidence="1">An aminoacyl-tRNA editing enzyme that deacylates mischarged D-aminoacyl-tRNAs. Also deacylates mischarged glycyl-tRNA(Ala), protecting cells against glycine mischarging by AlaRS. Acts via tRNA-based rather than protein-based catalysis; rejects L-amino acids rather than detecting D-amino acids in the active site. By recycling D-aminoacyl-tRNA to D-amino acids and free tRNA molecules, this enzyme counteracts the toxicity associated with the formation of D-aminoacyl-tRNA entities in vivo and helps enforce protein L-homochirality.</text>
</comment>
<comment type="catalytic activity">
    <reaction evidence="1">
        <text>glycyl-tRNA(Ala) + H2O = tRNA(Ala) + glycine + H(+)</text>
        <dbReference type="Rhea" id="RHEA:53744"/>
        <dbReference type="Rhea" id="RHEA-COMP:9657"/>
        <dbReference type="Rhea" id="RHEA-COMP:13640"/>
        <dbReference type="ChEBI" id="CHEBI:15377"/>
        <dbReference type="ChEBI" id="CHEBI:15378"/>
        <dbReference type="ChEBI" id="CHEBI:57305"/>
        <dbReference type="ChEBI" id="CHEBI:78442"/>
        <dbReference type="ChEBI" id="CHEBI:78522"/>
        <dbReference type="EC" id="3.1.1.96"/>
    </reaction>
</comment>
<comment type="catalytic activity">
    <reaction evidence="1">
        <text>a D-aminoacyl-tRNA + H2O = a tRNA + a D-alpha-amino acid + H(+)</text>
        <dbReference type="Rhea" id="RHEA:13953"/>
        <dbReference type="Rhea" id="RHEA-COMP:10123"/>
        <dbReference type="Rhea" id="RHEA-COMP:10124"/>
        <dbReference type="ChEBI" id="CHEBI:15377"/>
        <dbReference type="ChEBI" id="CHEBI:15378"/>
        <dbReference type="ChEBI" id="CHEBI:59871"/>
        <dbReference type="ChEBI" id="CHEBI:78442"/>
        <dbReference type="ChEBI" id="CHEBI:79333"/>
        <dbReference type="EC" id="3.1.1.96"/>
    </reaction>
</comment>
<comment type="subunit">
    <text evidence="1">Homodimer.</text>
</comment>
<comment type="subcellular location">
    <subcellularLocation>
        <location evidence="1">Cytoplasm</location>
    </subcellularLocation>
</comment>
<comment type="domain">
    <text evidence="1">A Gly-cisPro motif from one monomer fits into the active site of the other monomer to allow specific chiral rejection of L-amino acids.</text>
</comment>
<comment type="similarity">
    <text evidence="1">Belongs to the DTD family.</text>
</comment>
<name>DTD_CHRFK</name>
<protein>
    <recommendedName>
        <fullName evidence="1">D-aminoacyl-tRNA deacylase</fullName>
        <shortName evidence="1">DTD</shortName>
        <ecNumber evidence="1">3.1.1.96</ecNumber>
    </recommendedName>
    <alternativeName>
        <fullName evidence="1">Gly-tRNA(Ala) deacylase</fullName>
    </alternativeName>
</protein>
<sequence>MRAVIQRVSEASVTVDHKVCAVMRDGLLILLGIENEDNEEDIDWLCRKIINMRIFNDEDEVMNESLKSVDGDAIIVSQFTLHASTKKGNRPSYIKAAKPEVAEPLYLKFISKFQNELGKDVGSGIFGGDMKVSLLNDGPVTIIIDSKEKR</sequence>
<keyword id="KW-0963">Cytoplasm</keyword>
<keyword id="KW-0378">Hydrolase</keyword>
<keyword id="KW-0694">RNA-binding</keyword>
<keyword id="KW-0820">tRNA-binding</keyword>